<keyword id="KW-0002">3D-structure</keyword>
<keyword id="KW-0176">Collagen</keyword>
<keyword id="KW-0180">Complement pathway</keyword>
<keyword id="KW-0903">Direct protein sequencing</keyword>
<keyword id="KW-0225">Disease variant</keyword>
<keyword id="KW-1015">Disulfide bond</keyword>
<keyword id="KW-0325">Glycoprotein</keyword>
<keyword id="KW-0379">Hydroxylation</keyword>
<keyword id="KW-0391">Immunity</keyword>
<keyword id="KW-0399">Innate immunity</keyword>
<keyword id="KW-1267">Proteomics identification</keyword>
<keyword id="KW-0873">Pyrrolidone carboxylic acid</keyword>
<keyword id="KW-1185">Reference proteome</keyword>
<keyword id="KW-0677">Repeat</keyword>
<keyword id="KW-0964">Secreted</keyword>
<keyword id="KW-0732">Signal</keyword>
<name>C1QB_HUMAN</name>
<proteinExistence type="evidence at protein level"/>
<accession>P02746</accession>
<accession>Q5T959</accession>
<accession>Q96H17</accession>
<protein>
    <recommendedName>
        <fullName evidence="25">Complement C1q subcomponent subunit B</fullName>
    </recommendedName>
</protein>
<evidence type="ECO:0000255" key="1">
    <source>
        <dbReference type="PROSITE-ProRule" id="PRU00368"/>
    </source>
</evidence>
<evidence type="ECO:0000256" key="2">
    <source>
        <dbReference type="SAM" id="MobiDB-lite"/>
    </source>
</evidence>
<evidence type="ECO:0000269" key="3">
    <source>
    </source>
</evidence>
<evidence type="ECO:0000269" key="4">
    <source>
    </source>
</evidence>
<evidence type="ECO:0000269" key="5">
    <source>
    </source>
</evidence>
<evidence type="ECO:0000269" key="6">
    <source>
    </source>
</evidence>
<evidence type="ECO:0000269" key="7">
    <source>
    </source>
</evidence>
<evidence type="ECO:0000269" key="8">
    <source>
    </source>
</evidence>
<evidence type="ECO:0000269" key="9">
    <source>
    </source>
</evidence>
<evidence type="ECO:0000269" key="10">
    <source>
    </source>
</evidence>
<evidence type="ECO:0000269" key="11">
    <source>
    </source>
</evidence>
<evidence type="ECO:0000269" key="12">
    <source>
    </source>
</evidence>
<evidence type="ECO:0000269" key="13">
    <source>
    </source>
</evidence>
<evidence type="ECO:0000269" key="14">
    <source>
    </source>
</evidence>
<evidence type="ECO:0000269" key="15">
    <source>
    </source>
</evidence>
<evidence type="ECO:0000269" key="16">
    <source>
    </source>
</evidence>
<evidence type="ECO:0000269" key="17">
    <source>
    </source>
</evidence>
<evidence type="ECO:0000269" key="18">
    <source>
    </source>
</evidence>
<evidence type="ECO:0000269" key="19">
    <source>
    </source>
</evidence>
<evidence type="ECO:0000269" key="20">
    <source>
    </source>
</evidence>
<evidence type="ECO:0000269" key="21">
    <source>
    </source>
</evidence>
<evidence type="ECO:0000269" key="22">
    <source>
    </source>
</evidence>
<evidence type="ECO:0000269" key="23">
    <source>
    </source>
</evidence>
<evidence type="ECO:0000303" key="24">
    <source>
    </source>
</evidence>
<evidence type="ECO:0000305" key="25"/>
<evidence type="ECO:0000312" key="26">
    <source>
        <dbReference type="HGNC" id="HGNC:1242"/>
    </source>
</evidence>
<evidence type="ECO:0007744" key="27">
    <source>
        <dbReference type="PDB" id="1PK6"/>
    </source>
</evidence>
<evidence type="ECO:0007744" key="28">
    <source>
        <dbReference type="PDB" id="2JG8"/>
    </source>
</evidence>
<evidence type="ECO:0007744" key="29">
    <source>
        <dbReference type="PDB" id="2JG9"/>
    </source>
</evidence>
<evidence type="ECO:0007744" key="30">
    <source>
        <dbReference type="PDB" id="2WNU"/>
    </source>
</evidence>
<evidence type="ECO:0007744" key="31">
    <source>
        <dbReference type="PDB" id="2WNV"/>
    </source>
</evidence>
<evidence type="ECO:0007744" key="32">
    <source>
        <dbReference type="PDB" id="6FCZ"/>
    </source>
</evidence>
<evidence type="ECO:0007829" key="33">
    <source>
        <dbReference type="PDB" id="1PK6"/>
    </source>
</evidence>
<evidence type="ECO:0007829" key="34">
    <source>
        <dbReference type="PDB" id="2WNV"/>
    </source>
</evidence>
<evidence type="ECO:0007829" key="35">
    <source>
        <dbReference type="PDB" id="5HKJ"/>
    </source>
</evidence>
<organism>
    <name type="scientific">Homo sapiens</name>
    <name type="common">Human</name>
    <dbReference type="NCBI Taxonomy" id="9606"/>
    <lineage>
        <taxon>Eukaryota</taxon>
        <taxon>Metazoa</taxon>
        <taxon>Chordata</taxon>
        <taxon>Craniata</taxon>
        <taxon>Vertebrata</taxon>
        <taxon>Euteleostomi</taxon>
        <taxon>Mammalia</taxon>
        <taxon>Eutheria</taxon>
        <taxon>Euarchontoglires</taxon>
        <taxon>Primates</taxon>
        <taxon>Haplorrhini</taxon>
        <taxon>Catarrhini</taxon>
        <taxon>Hominidae</taxon>
        <taxon>Homo</taxon>
    </lineage>
</organism>
<comment type="function">
    <text evidence="3 6 7 8 11 12 14 15 18 20">Core component of the complement C1 complex, a multiprotein complex that initiates the classical pathway of the complement system, a cascade of proteins that leads to phagocytosis and breakdown of pathogens and signaling that strengthens the adaptive immune system (PubMed:12847249, PubMed:19006321, PubMed:24626930, PubMed:29449492, PubMed:3258649, PubMed:34155115, PubMed:6249812, PubMed:6776418). The classical complement pathway is initiated by the C1Q subcomplex of the C1 complex, which specifically binds IgG or IgM immunoglobulins complexed with antigens, forming antigen-antibody complexes on the surface of pathogens: C1QA, together with C1QB and C1QC, specifically recognizes and binds the Fc regions of IgG or IgM via its C1q domain (PubMed:12847249, PubMed:19006321, PubMed:24626930, PubMed:29449492, PubMed:3258649, PubMed:6776418). Immunoglobulin-binding activates the proenzyme C1R, which cleaves C1S, initiating the proteolytic cascade of the complement system (PubMed:29449492). The C1Q subcomplex is activated by a hexamer of IgG complexed with antigens, while it is activated by a pentameric IgM (PubMed:19706439, PubMed:24626930, PubMed:29449492). The C1Q subcomplex also recognizes and binds phosphatidylserine exposed on the surface of cells undergoing programmed cell death, possibly promoting activation of the complement system (PubMed:18250442).</text>
</comment>
<comment type="activity regulation">
    <text evidence="9 17">The C1Q subcomplex is inhibited by sulfated molecules, such as triterpenoid sulfates, heparan sulfate, or chondroitin sulfates.</text>
</comment>
<comment type="subunit">
    <text evidence="4 6 9 10 12 13 15 18 21">Core component of the complement C1 complex, a calcium-dependent complex composed of 1 molecule of the C1Q subcomplex, 2 molecules of C1R and 2 molecules of C1S (PubMed:23650384, PubMed:29449492, PubMed:34155115, PubMed:6249812). The C1Q subcomplex is composed 18 subunits: 3 chains of C1QA, C1QB, and C1QC trimerize to form 6 collagen-like triple helices connected to six globular ligand-recognition modules (C1q domain) (PubMed:12960167, PubMed:18250442, PubMed:20548024, PubMed:29449492, PubMed:2988513, PubMed:6952210).</text>
</comment>
<comment type="interaction">
    <interactant intactId="EBI-2813376">
        <id>P02746</id>
    </interactant>
    <interactant intactId="EBI-1220209">
        <id>P02745</id>
        <label>C1QA</label>
    </interactant>
    <organismsDiffer>false</organismsDiffer>
    <experiments>5</experiments>
</comment>
<comment type="interaction">
    <interactant intactId="EBI-2813376">
        <id>P02746</id>
    </interactant>
    <interactant intactId="EBI-14032968">
        <id>PRO_0000018590</id>
        <label>C1QBP</label>
        <dbReference type="UniProtKB" id="Q07021"/>
    </interactant>
    <organismsDiffer>false</organismsDiffer>
    <experiments>4</experiments>
</comment>
<comment type="interaction">
    <interactant intactId="EBI-2813376">
        <id>P02746</id>
    </interactant>
    <interactant intactId="EBI-947187">
        <id>Q9UHD9</id>
        <label>UBQLN2</label>
    </interactant>
    <organismsDiffer>false</organismsDiffer>
    <experiments>3</experiments>
</comment>
<comment type="subcellular location">
    <subcellularLocation>
        <location evidence="6 12 22">Secreted</location>
    </subcellularLocation>
    <subcellularLocation>
        <location evidence="15">Cell surface</location>
    </subcellularLocation>
    <text evidence="15">Specifically binds IgG or IgM immunoglobulins complexed with antigens, forming antigen-antibody complexes on the surface of pathogens.</text>
</comment>
<comment type="domain">
    <text evidence="12">The C1q domain is the ligand-recognition domain, which specifically recognizes and binds the Fc regions of IgG or IgM immunoglobulins.</text>
</comment>
<comment type="domain">
    <text evidence="12">The collagen-like domain interacts with C1R and C1S proenzymes.</text>
</comment>
<comment type="PTM">
    <text evidence="16 19 22">Hydroxylated on lysine and proline residues. Hydroxylated lysine residues can be glycosylated. Human C1Q contains up to 68.3 hydroxylysine-galactosylglucose residues and up to 2.5 hydroxylysine-galactose per molecule. Total percentage hydroxylysine residues glycosylated is 86.4%.</text>
</comment>
<comment type="disease" evidence="23">
    <disease id="DI-06645">
        <name>C1q deficiency 2</name>
        <acronym>C1QD2</acronym>
        <description>An autosomal recessive disorder caused by impaired activation of the complement classical pathway. It generally leads to severe immune complex disease characterized by recurrent skin lesions, chronic infections, an increased risk of systemic lupus erythematosus, and glomerulonephritis.</description>
        <dbReference type="MIM" id="620321"/>
    </disease>
    <text>The disease is caused by variants affecting the gene represented in this entry.</text>
</comment>
<comment type="online information" name="C1QBbase">
    <link uri="https://databases.lovd.nl/shared/genes/C1QB"/>
    <text>C1QB mutation db</text>
</comment>
<reference key="1">
    <citation type="journal article" date="2006" name="Nature">
        <title>The DNA sequence and biological annotation of human chromosome 1.</title>
        <authorList>
            <person name="Gregory S.G."/>
            <person name="Barlow K.F."/>
            <person name="McLay K.E."/>
            <person name="Kaul R."/>
            <person name="Swarbreck D."/>
            <person name="Dunham A."/>
            <person name="Scott C.E."/>
            <person name="Howe K.L."/>
            <person name="Woodfine K."/>
            <person name="Spencer C.C.A."/>
            <person name="Jones M.C."/>
            <person name="Gillson C."/>
            <person name="Searle S."/>
            <person name="Zhou Y."/>
            <person name="Kokocinski F."/>
            <person name="McDonald L."/>
            <person name="Evans R."/>
            <person name="Phillips K."/>
            <person name="Atkinson A."/>
            <person name="Cooper R."/>
            <person name="Jones C."/>
            <person name="Hall R.E."/>
            <person name="Andrews T.D."/>
            <person name="Lloyd C."/>
            <person name="Ainscough R."/>
            <person name="Almeida J.P."/>
            <person name="Ambrose K.D."/>
            <person name="Anderson F."/>
            <person name="Andrew R.W."/>
            <person name="Ashwell R.I.S."/>
            <person name="Aubin K."/>
            <person name="Babbage A.K."/>
            <person name="Bagguley C.L."/>
            <person name="Bailey J."/>
            <person name="Beasley H."/>
            <person name="Bethel G."/>
            <person name="Bird C.P."/>
            <person name="Bray-Allen S."/>
            <person name="Brown J.Y."/>
            <person name="Brown A.J."/>
            <person name="Buckley D."/>
            <person name="Burton J."/>
            <person name="Bye J."/>
            <person name="Carder C."/>
            <person name="Chapman J.C."/>
            <person name="Clark S.Y."/>
            <person name="Clarke G."/>
            <person name="Clee C."/>
            <person name="Cobley V."/>
            <person name="Collier R.E."/>
            <person name="Corby N."/>
            <person name="Coville G.J."/>
            <person name="Davies J."/>
            <person name="Deadman R."/>
            <person name="Dunn M."/>
            <person name="Earthrowl M."/>
            <person name="Ellington A.G."/>
            <person name="Errington H."/>
            <person name="Frankish A."/>
            <person name="Frankland J."/>
            <person name="French L."/>
            <person name="Garner P."/>
            <person name="Garnett J."/>
            <person name="Gay L."/>
            <person name="Ghori M.R.J."/>
            <person name="Gibson R."/>
            <person name="Gilby L.M."/>
            <person name="Gillett W."/>
            <person name="Glithero R.J."/>
            <person name="Grafham D.V."/>
            <person name="Griffiths C."/>
            <person name="Griffiths-Jones S."/>
            <person name="Grocock R."/>
            <person name="Hammond S."/>
            <person name="Harrison E.S.I."/>
            <person name="Hart E."/>
            <person name="Haugen E."/>
            <person name="Heath P.D."/>
            <person name="Holmes S."/>
            <person name="Holt K."/>
            <person name="Howden P.J."/>
            <person name="Hunt A.R."/>
            <person name="Hunt S.E."/>
            <person name="Hunter G."/>
            <person name="Isherwood J."/>
            <person name="James R."/>
            <person name="Johnson C."/>
            <person name="Johnson D."/>
            <person name="Joy A."/>
            <person name="Kay M."/>
            <person name="Kershaw J.K."/>
            <person name="Kibukawa M."/>
            <person name="Kimberley A.M."/>
            <person name="King A."/>
            <person name="Knights A.J."/>
            <person name="Lad H."/>
            <person name="Laird G."/>
            <person name="Lawlor S."/>
            <person name="Leongamornlert D.A."/>
            <person name="Lloyd D.M."/>
            <person name="Loveland J."/>
            <person name="Lovell J."/>
            <person name="Lush M.J."/>
            <person name="Lyne R."/>
            <person name="Martin S."/>
            <person name="Mashreghi-Mohammadi M."/>
            <person name="Matthews L."/>
            <person name="Matthews N.S.W."/>
            <person name="McLaren S."/>
            <person name="Milne S."/>
            <person name="Mistry S."/>
            <person name="Moore M.J.F."/>
            <person name="Nickerson T."/>
            <person name="O'Dell C.N."/>
            <person name="Oliver K."/>
            <person name="Palmeiri A."/>
            <person name="Palmer S.A."/>
            <person name="Parker A."/>
            <person name="Patel D."/>
            <person name="Pearce A.V."/>
            <person name="Peck A.I."/>
            <person name="Pelan S."/>
            <person name="Phelps K."/>
            <person name="Phillimore B.J."/>
            <person name="Plumb R."/>
            <person name="Rajan J."/>
            <person name="Raymond C."/>
            <person name="Rouse G."/>
            <person name="Saenphimmachak C."/>
            <person name="Sehra H.K."/>
            <person name="Sheridan E."/>
            <person name="Shownkeen R."/>
            <person name="Sims S."/>
            <person name="Skuce C.D."/>
            <person name="Smith M."/>
            <person name="Steward C."/>
            <person name="Subramanian S."/>
            <person name="Sycamore N."/>
            <person name="Tracey A."/>
            <person name="Tromans A."/>
            <person name="Van Helmond Z."/>
            <person name="Wall M."/>
            <person name="Wallis J.M."/>
            <person name="White S."/>
            <person name="Whitehead S.L."/>
            <person name="Wilkinson J.E."/>
            <person name="Willey D.L."/>
            <person name="Williams H."/>
            <person name="Wilming L."/>
            <person name="Wray P.W."/>
            <person name="Wu Z."/>
            <person name="Coulson A."/>
            <person name="Vaudin M."/>
            <person name="Sulston J.E."/>
            <person name="Durbin R.M."/>
            <person name="Hubbard T."/>
            <person name="Wooster R."/>
            <person name="Dunham I."/>
            <person name="Carter N.P."/>
            <person name="McVean G."/>
            <person name="Ross M.T."/>
            <person name="Harrow J."/>
            <person name="Olson M.V."/>
            <person name="Beck S."/>
            <person name="Rogers J."/>
            <person name="Bentley D.R."/>
        </authorList>
    </citation>
    <scope>NUCLEOTIDE SEQUENCE [LARGE SCALE GENOMIC DNA]</scope>
</reference>
<reference key="2">
    <citation type="journal article" date="2004" name="Genome Res.">
        <title>The status, quality, and expansion of the NIH full-length cDNA project: the Mammalian Gene Collection (MGC).</title>
        <authorList>
            <consortium name="The MGC Project Team"/>
        </authorList>
    </citation>
    <scope>NUCLEOTIDE SEQUENCE [LARGE SCALE MRNA]</scope>
    <source>
        <tissue>Brain</tissue>
    </source>
</reference>
<reference key="3">
    <citation type="journal article" date="1985" name="Biochem. J.">
        <title>Molecular cloning and characterization of the complementary DNA and gene coding for the B-chain of subcomponent C1q of the human complement system.</title>
        <authorList>
            <person name="Reid K.B.M."/>
        </authorList>
    </citation>
    <scope>NUCLEOTIDE SEQUENCE [MRNA] OF 26-253</scope>
</reference>
<reference key="4">
    <citation type="journal article" date="1978" name="Biochem. J.">
        <title>Amino acid sequence of the N-terminal 108 amino acid residues of the B chain of subcomponent C1q of the first component of human complement.</title>
        <authorList>
            <person name="Reid K.B.M."/>
            <person name="Thompson E.O.P."/>
        </authorList>
    </citation>
    <scope>PROTEIN SEQUENCE OF 28-195</scope>
    <scope>SUBCELLULAR LOCATION</scope>
    <scope>GLYCOSYLATION</scope>
    <scope>PYROGLUTAMATE FORMATION AT GLN-28</scope>
    <scope>DISULFIDE BOND</scope>
    <scope>HYDROXYLATION</scope>
</reference>
<reference key="5">
    <citation type="journal article" date="1979" name="Biochem. J.">
        <title>Complete amino acid sequences of the three collagen-like regions present in subcomponent C1q of the first component of human complement.</title>
        <authorList>
            <person name="Reid K.B.M."/>
        </authorList>
    </citation>
    <scope>PROTEIN SEQUENCE OF 28-135</scope>
    <scope>HYDROXYLATION AT PRO-35; PRO-38; PRO-41; PRO-53; PRO-56; LYS-59; LYS-62; PRO-65; LYS-77; PRO-83; PRO-86; LYS-92; LYS-98; PRO-101; PRO-104; PRO-107 AND LYS-110</scope>
</reference>
<reference key="6">
    <citation type="journal article" date="1982" name="Biochem. J.">
        <title>Completion of the amino acid sequences of the A and B chains of subcomponent C1q of the first component of human complement.</title>
        <authorList>
            <person name="Reid K.B.M."/>
            <person name="Gagnon J."/>
            <person name="Frampton J."/>
        </authorList>
    </citation>
    <scope>PROTEIN SEQUENCE OF 136-253</scope>
</reference>
<reference key="7">
    <citation type="journal article" date="1984" name="Philos. Trans. R. Soc. Lond., B, Biol. Sci.">
        <title>Cloning and characterization of the complementary DNA for the B chain of normal human serum C1q.</title>
        <authorList>
            <person name="Reid K.B.M."/>
            <person name="Bentley D.R."/>
            <person name="Wood K.J."/>
        </authorList>
    </citation>
    <scope>NUCLEOTIDE SEQUENCE [MRNA] OF 226-253</scope>
    <source>
        <tissue>Liver</tissue>
    </source>
</reference>
<reference key="8">
    <citation type="journal article" date="1980" name="J. Biol. Chem.">
        <title>Activation of a complex of C1r and C1s subcomponents of human complement C1 by the third subcomponent C1q.</title>
        <authorList>
            <person name="Lin T.Y."/>
            <person name="Fletcher D.S."/>
        </authorList>
    </citation>
    <scope>FUNCTION</scope>
    <scope>SUBUNIT</scope>
</reference>
<reference key="9">
    <citation type="journal article" date="1980" name="Nature">
        <title>The Clq receptor site on immunoglobulin G.</title>
        <authorList>
            <person name="Burton D.R."/>
            <person name="Boyd J."/>
            <person name="Brampton A.D."/>
            <person name="Easterbrook-Smith S.B."/>
            <person name="Emanuel E.J."/>
            <person name="Novotny J."/>
            <person name="Rademacher T.W."/>
            <person name="van Schravendijk M.R."/>
            <person name="Sternberg M.J."/>
            <person name="Dwek R.A."/>
        </authorList>
    </citation>
    <scope>FUNCTION</scope>
</reference>
<reference key="10">
    <citation type="journal article" date="1981" name="Coll. Relat. Res.">
        <title>Comparable content of hydroxylysine-linked glycosides in subcomponents C1q of the first component of human, bovine and mouse complement.</title>
        <authorList>
            <person name="Yonemasu K."/>
            <person name="Shinkai H."/>
            <person name="Sasaki T."/>
        </authorList>
    </citation>
    <scope>GLYCOSYLATION ON HYDROXYLYSINES</scope>
</reference>
<reference key="11">
    <citation type="journal article" date="1982" name="Proc. Natl. Acad. Sci. U.S.A.">
        <title>Ultrastructure of the first component of human complement: electron microscopy of the crosslinked complex.</title>
        <authorList>
            <person name="Strang C.J."/>
            <person name="Siegel R.C."/>
            <person name="Phillips M.L."/>
            <person name="Poon P.H."/>
            <person name="Schumaker V.N."/>
        </authorList>
    </citation>
    <scope>SUBUNIT</scope>
</reference>
<reference key="12">
    <citation type="journal article" date="1983" name="J. Biol. Chem.">
        <title>The binding properties of human complement component C1q. Interaction with mucopolysaccharides.</title>
        <authorList>
            <person name="Almeda S."/>
            <person name="Rosenberg R.D."/>
            <person name="Bing D.H."/>
        </authorList>
    </citation>
    <scope>ACTIVITY REGULATION</scope>
</reference>
<reference key="13">
    <citation type="journal article" date="1985" name="Biochem. J.">
        <title>Molecular modelling of human complement subcomponent C1q and its complex with C1r2C1s2 derived from neutron-scattering curves and hydrodynamic properties.</title>
        <authorList>
            <person name="Perkins S.J."/>
        </authorList>
    </citation>
    <scope>SUBUNIT</scope>
</reference>
<reference key="14">
    <citation type="journal article" date="1988" name="Nature">
        <title>The binding site for C1q on IgG.</title>
        <authorList>
            <person name="Duncan A.R."/>
            <person name="Winter G."/>
        </authorList>
    </citation>
    <scope>FUNCTION</scope>
</reference>
<reference key="15">
    <citation type="journal article" date="2003" name="J. Immunol.">
        <title>Modular organization of the carboxyl-terminal, globular head region of human C1q A, B, and C chains.</title>
        <authorList>
            <person name="Kishore U."/>
            <person name="Gupta S.K."/>
            <person name="Perdikoulis M.V."/>
            <person name="Kojouharova M.S."/>
            <person name="Urban B.C."/>
            <person name="Reid K.B."/>
        </authorList>
    </citation>
    <scope>FUNCTION FOLLOWING ASSOCIATION WITH IMMUNOGLOBULIN MU</scope>
</reference>
<reference key="16">
    <citation type="journal article" date="2008" name="Biochemistry">
        <title>Interaction of human C1q with IgG and IgM: revisited.</title>
        <authorList>
            <person name="Gadjeva M.G."/>
            <person name="Rouseva M.M."/>
            <person name="Zlatarova A.S."/>
            <person name="Reid K.B."/>
            <person name="Kishore U."/>
            <person name="Kojouharova M.S."/>
        </authorList>
    </citation>
    <scope>FUNCTION FOLLOWING ASSOCIATION WITH IMMUNOGLOBULINS</scope>
</reference>
<reference key="17">
    <citation type="journal article" date="2009" name="Proc. Natl. Acad. Sci. U.S.A.">
        <title>The human IgM pentamer is a mushroom-shaped molecule with a flexural bias.</title>
        <authorList>
            <person name="Czajkowsky D.M."/>
            <person name="Shao Z."/>
        </authorList>
    </citation>
    <scope>FUNCTION</scope>
</reference>
<reference key="18">
    <citation type="journal article" date="2013" name="Proc. Natl. Acad. Sci. U.S.A.">
        <title>Expression of recombinant human complement C1q allows identification of the C1r/C1s-binding sites.</title>
        <authorList>
            <person name="Bally I."/>
            <person name="Ancelet S."/>
            <person name="Moriscot C."/>
            <person name="Gonnet F."/>
            <person name="Mantovani A."/>
            <person name="Daniel R."/>
            <person name="Schoehn G."/>
            <person name="Arlaud G.J."/>
            <person name="Thielens N.M."/>
        </authorList>
    </citation>
    <scope>SUBUNIT</scope>
    <scope>MUTAGENESIS OF LYS-88</scope>
</reference>
<reference key="19">
    <citation type="journal article" date="2014" name="Science">
        <title>Complement is activated by IgG hexamers assembled at the cell surface.</title>
        <authorList>
            <person name="Diebolder C.A."/>
            <person name="Beurskens F.J."/>
            <person name="de Jong R.N."/>
            <person name="Koning R.I."/>
            <person name="Strumane K."/>
            <person name="Lindorfer M.A."/>
            <person name="Voorhorst M."/>
            <person name="Ugurlar D."/>
            <person name="Rosati S."/>
            <person name="Heck A.J."/>
            <person name="van de Winkel J.G."/>
            <person name="Wilson I.A."/>
            <person name="Koster A.J."/>
            <person name="Taylor R.P."/>
            <person name="Saphire E.O."/>
            <person name="Burton D.R."/>
            <person name="Schuurman J."/>
            <person name="Gros P."/>
            <person name="Parren P.W."/>
        </authorList>
    </citation>
    <scope>FUNCTION</scope>
</reference>
<reference key="20">
    <citation type="journal article" date="2021" name="Proc. Natl. Acad. Sci. U.S.A.">
        <title>C1q binding to surface-bound IgG is stabilized by C1r2s2 proteases.</title>
        <authorList>
            <person name="Zwarthoff S.A."/>
            <person name="Widmer K."/>
            <person name="Kuipers A."/>
            <person name="Strasser J."/>
            <person name="Ruyken M."/>
            <person name="Aerts P.C."/>
            <person name="de Haas C.J.C."/>
            <person name="Ugurlar D."/>
            <person name="den Boer M.A."/>
            <person name="Vidarsson G."/>
            <person name="van Strijp J.A.G."/>
            <person name="Gros P."/>
            <person name="Parren P.W.H.I."/>
            <person name="van Kessel K.P.M."/>
            <person name="Preiner J."/>
            <person name="Beurskens F.J."/>
            <person name="Schuurman J."/>
            <person name="Ricklin D."/>
            <person name="Rooijakkers S.H.M."/>
        </authorList>
    </citation>
    <scope>FUNCTION</scope>
    <scope>SUBUNIT</scope>
    <scope>SUBCELLULAR LOCATION</scope>
</reference>
<reference evidence="27" key="21">
    <citation type="journal article" date="2003" name="J. Biol. Chem.">
        <title>The crystal structure of the globular head of complement protein C1q provides a basis for its versatile recognition properties.</title>
        <authorList>
            <person name="Gaboriaud C."/>
            <person name="Juanhuix J."/>
            <person name="Gruez A."/>
            <person name="Lacroix M."/>
            <person name="Darnault C."/>
            <person name="Pignol D."/>
            <person name="Verger D."/>
            <person name="Fontecilla-Camps J.-C."/>
            <person name="Arlaud G.J."/>
        </authorList>
    </citation>
    <scope>X-RAY CRYSTALLOGRAPHY (1.85 ANGSTROMS) OF 119-250 IN COMPLEX WITH C1QA; C1QC AND CALCIUM</scope>
    <scope>SUBUNIT</scope>
</reference>
<reference evidence="28 29" key="22">
    <citation type="journal article" date="2008" name="J. Immunol.">
        <title>C1q binds phosphatidylserine and likely acts as a multiligand-bridging molecule in apoptotic cell recognition.</title>
        <authorList>
            <person name="Paidassi H."/>
            <person name="Tacnet-Delorme P."/>
            <person name="Garlatti V."/>
            <person name="Darnault C."/>
            <person name="Ghebrehiwet B."/>
            <person name="Gaboriaud C."/>
            <person name="Arlaud G.J."/>
            <person name="Frachet P."/>
        </authorList>
    </citation>
    <scope>X-RAY CRYSTALLOGRAPHY (1.90 ANGSTROMS) OF 118-253 IN COMPLEX WITH C1QA; C1QC AND CALCIUM</scope>
    <scope>FUNCTION</scope>
    <scope>SUBCELLULAR LOCATION</scope>
    <scope>SUBUNIT</scope>
</reference>
<reference evidence="30 31" key="23">
    <citation type="journal article" date="2010" name="J. Immunol.">
        <title>C1q binds deoxyribose and heparan sulfate through neighboring sites of its recognition domain.</title>
        <authorList>
            <person name="Garlatti V."/>
            <person name="Chouquet A."/>
            <person name="Lunardi T."/>
            <person name="Vives R."/>
            <person name="Paidassi H."/>
            <person name="Lortat-Jacob H."/>
            <person name="Thielens N.M."/>
            <person name="Arlaud G.J."/>
            <person name="Gaboriaud C."/>
        </authorList>
    </citation>
    <scope>X-RAY CRYSTALLOGRAPHY (1.25 ANGSTROMS) OF 118-253 IN COMPLEX WITH C1QA AND C1QC</scope>
    <scope>ACTIVITY REGULATION</scope>
    <scope>SUBUNIT</scope>
</reference>
<reference evidence="32" key="24">
    <citation type="journal article" date="2018" name="Science">
        <title>Structures of C1-IgG1 provide insights into how danger pattern recognition activates complement.</title>
        <authorList>
            <person name="Ugurlar D."/>
            <person name="Howes S.C."/>
            <person name="de Kreuk B.J."/>
            <person name="Koning R.I."/>
            <person name="de Jong R.N."/>
            <person name="Beurskens F.J."/>
            <person name="Schuurman J."/>
            <person name="Koster A.J."/>
            <person name="Sharp T.H."/>
            <person name="Parren P.W.H.I."/>
            <person name="Gros P."/>
        </authorList>
    </citation>
    <scope>STRUCTURE BY ELECTRON MICROSCOPY (10.00 ANGSTROMS) OF 119-250 IN COMPLEX WITH C1QA; C1QC AND IMMUNOGLOBULIN GAMMA-1 HEAVY CHAIN</scope>
    <scope>SUBUNIT</scope>
    <scope>DISULFIDE BOND</scope>
</reference>
<reference key="25">
    <citation type="journal article" date="1998" name="Immunobiology">
        <title>Molecular basis of hereditary C1q deficiency.</title>
        <authorList>
            <person name="Petry F."/>
        </authorList>
    </citation>
    <scope>REVIEW ON C1Q DEFICIENCY</scope>
</reference>
<reference key="26">
    <citation type="journal article" date="1997" name="Immunopharmacology">
        <title>Molecular basis of a new type of C1q-deficiency associated with a non-functional low molecular weight (LMW) C1q: parallels and differences to other known genetic C1q-defects.</title>
        <authorList>
            <person name="Petry F."/>
            <person name="Hauptmann G."/>
            <person name="Goetz J."/>
            <person name="Grosshans E."/>
            <person name="Loos M."/>
        </authorList>
    </citation>
    <scope>VARIANT C1QD2 ASP-42</scope>
</reference>
<reference key="27">
    <citation type="journal article" date="2006" name="Science">
        <title>The consensus coding sequences of human breast and colorectal cancers.</title>
        <authorList>
            <person name="Sjoeblom T."/>
            <person name="Jones S."/>
            <person name="Wood L.D."/>
            <person name="Parsons D.W."/>
            <person name="Lin J."/>
            <person name="Barber T.D."/>
            <person name="Mandelker D."/>
            <person name="Leary R.J."/>
            <person name="Ptak J."/>
            <person name="Silliman N."/>
            <person name="Szabo S."/>
            <person name="Buckhaults P."/>
            <person name="Farrell C."/>
            <person name="Meeh P."/>
            <person name="Markowitz S.D."/>
            <person name="Willis J."/>
            <person name="Dawson D."/>
            <person name="Willson J.K.V."/>
            <person name="Gazdar A.F."/>
            <person name="Hartigan J."/>
            <person name="Wu L."/>
            <person name="Liu C."/>
            <person name="Parmigiani G."/>
            <person name="Park B.H."/>
            <person name="Bachman K.E."/>
            <person name="Papadopoulos N."/>
            <person name="Vogelstein B."/>
            <person name="Kinzler K.W."/>
            <person name="Velculescu V.E."/>
        </authorList>
    </citation>
    <scope>VARIANT [LARGE SCALE ANALYSIS] THR-123</scope>
</reference>
<dbReference type="EMBL" id="AL158086">
    <property type="status" value="NOT_ANNOTATED_CDS"/>
    <property type="molecule type" value="Genomic_DNA"/>
</dbReference>
<dbReference type="EMBL" id="BC008983">
    <property type="protein sequence ID" value="AAH08983.1"/>
    <property type="molecule type" value="mRNA"/>
</dbReference>
<dbReference type="EMBL" id="X03084">
    <property type="protein sequence ID" value="CAA26880.1"/>
    <property type="molecule type" value="mRNA"/>
</dbReference>
<dbReference type="EMBL" id="M36278">
    <property type="protein sequence ID" value="AAC41692.1"/>
    <property type="molecule type" value="mRNA"/>
</dbReference>
<dbReference type="PIR" id="B23422">
    <property type="entry name" value="C1HUQB"/>
</dbReference>
<dbReference type="RefSeq" id="NP_000482.3">
    <property type="nucleotide sequence ID" value="NM_000491.4"/>
</dbReference>
<dbReference type="RefSeq" id="XP_011540361.1">
    <property type="nucleotide sequence ID" value="XM_011542059.2"/>
</dbReference>
<dbReference type="PDB" id="1PK6">
    <property type="method" value="X-ray"/>
    <property type="resolution" value="1.85 A"/>
    <property type="chains" value="B=119-250"/>
</dbReference>
<dbReference type="PDB" id="2JG8">
    <property type="method" value="X-ray"/>
    <property type="resolution" value="2.05 A"/>
    <property type="chains" value="B/E=118-253"/>
</dbReference>
<dbReference type="PDB" id="2JG9">
    <property type="method" value="X-ray"/>
    <property type="resolution" value="1.90 A"/>
    <property type="chains" value="B/E=118-253"/>
</dbReference>
<dbReference type="PDB" id="2WNU">
    <property type="method" value="X-ray"/>
    <property type="resolution" value="2.30 A"/>
    <property type="chains" value="B/E=118-253"/>
</dbReference>
<dbReference type="PDB" id="2WNV">
    <property type="method" value="X-ray"/>
    <property type="resolution" value="1.25 A"/>
    <property type="chains" value="B/E=118-253"/>
</dbReference>
<dbReference type="PDB" id="5HKJ">
    <property type="method" value="X-ray"/>
    <property type="resolution" value="1.35 A"/>
    <property type="chains" value="A=117-253"/>
</dbReference>
<dbReference type="PDB" id="5HZF">
    <property type="method" value="X-ray"/>
    <property type="resolution" value="1.55 A"/>
    <property type="chains" value="A=117-253"/>
</dbReference>
<dbReference type="PDB" id="6FCZ">
    <property type="method" value="EM"/>
    <property type="resolution" value="10.00 A"/>
    <property type="chains" value="B=119-250"/>
</dbReference>
<dbReference type="PDB" id="6Z6V">
    <property type="method" value="X-ray"/>
    <property type="resolution" value="2.19 A"/>
    <property type="chains" value="B/E=119-253"/>
</dbReference>
<dbReference type="PDB" id="9C9L">
    <property type="method" value="EM"/>
    <property type="resolution" value="3.70 A"/>
    <property type="chains" value="A/D/E/F/G/H=34-46"/>
</dbReference>
<dbReference type="PDB" id="9C9U">
    <property type="method" value="EM"/>
    <property type="resolution" value="4.50 A"/>
    <property type="chains" value="A/D/E/F/G/H=28-71"/>
</dbReference>
<dbReference type="PDBsum" id="1PK6"/>
<dbReference type="PDBsum" id="2JG8"/>
<dbReference type="PDBsum" id="2JG9"/>
<dbReference type="PDBsum" id="2WNU"/>
<dbReference type="PDBsum" id="2WNV"/>
<dbReference type="PDBsum" id="5HKJ"/>
<dbReference type="PDBsum" id="5HZF"/>
<dbReference type="PDBsum" id="6FCZ"/>
<dbReference type="PDBsum" id="6Z6V"/>
<dbReference type="PDBsum" id="9C9L"/>
<dbReference type="PDBsum" id="9C9U"/>
<dbReference type="EMDB" id="EMD-4232"/>
<dbReference type="EMDB" id="EMD-45363"/>
<dbReference type="EMDB" id="EMD-45371"/>
<dbReference type="SASBDB" id="P02746"/>
<dbReference type="SMR" id="P02746"/>
<dbReference type="BioGRID" id="107174">
    <property type="interactions" value="101"/>
</dbReference>
<dbReference type="ComplexPortal" id="CPX-1919">
    <property type="entry name" value="Complement component C1q complex"/>
</dbReference>
<dbReference type="CORUM" id="P02746"/>
<dbReference type="FunCoup" id="P02746">
    <property type="interactions" value="98"/>
</dbReference>
<dbReference type="IntAct" id="P02746">
    <property type="interactions" value="77"/>
</dbReference>
<dbReference type="MINT" id="P02746"/>
<dbReference type="STRING" id="9606.ENSP00000313967"/>
<dbReference type="DrugBank" id="DB00112">
    <property type="generic name" value="Bevacizumab"/>
</dbReference>
<dbReference type="DrugBank" id="DB00002">
    <property type="generic name" value="Cetuximab"/>
</dbReference>
<dbReference type="DrugBank" id="DB00111">
    <property type="generic name" value="Daclizumab"/>
</dbReference>
<dbReference type="DrugBank" id="DB00005">
    <property type="generic name" value="Etanercept"/>
</dbReference>
<dbReference type="DrugBank" id="DB00110">
    <property type="generic name" value="Palivizumab"/>
</dbReference>
<dbReference type="DrugBank" id="DB01593">
    <property type="generic name" value="Zinc"/>
</dbReference>
<dbReference type="DrugBank" id="DB14487">
    <property type="generic name" value="Zinc acetate"/>
</dbReference>
<dbReference type="DrugBank" id="DB14533">
    <property type="generic name" value="Zinc chloride"/>
</dbReference>
<dbReference type="DrugBank" id="DB14548">
    <property type="generic name" value="Zinc sulfate, unspecified form"/>
</dbReference>
<dbReference type="GlyGen" id="P02746">
    <property type="glycosylation" value="2 sites"/>
</dbReference>
<dbReference type="iPTMnet" id="P02746"/>
<dbReference type="PhosphoSitePlus" id="P02746"/>
<dbReference type="BioMuta" id="C1QB"/>
<dbReference type="DMDM" id="298286922"/>
<dbReference type="CPTAC" id="non-CPTAC-1101"/>
<dbReference type="jPOST" id="P02746"/>
<dbReference type="MassIVE" id="P02746"/>
<dbReference type="PaxDb" id="9606-ENSP00000313967"/>
<dbReference type="ProteomicsDB" id="51562"/>
<dbReference type="DNASU" id="713"/>
<dbReference type="GeneID" id="713"/>
<dbReference type="KEGG" id="hsa:713"/>
<dbReference type="UCSC" id="uc001bgd.3">
    <property type="organism name" value="human"/>
</dbReference>
<dbReference type="AGR" id="HGNC:1242"/>
<dbReference type="CTD" id="713"/>
<dbReference type="DisGeNET" id="713"/>
<dbReference type="GeneCards" id="C1QB"/>
<dbReference type="HGNC" id="HGNC:1242">
    <property type="gene designation" value="C1QB"/>
</dbReference>
<dbReference type="MalaCards" id="C1QB"/>
<dbReference type="MIM" id="120570">
    <property type="type" value="gene"/>
</dbReference>
<dbReference type="MIM" id="620321">
    <property type="type" value="phenotype"/>
</dbReference>
<dbReference type="neXtProt" id="NX_P02746"/>
<dbReference type="Orphanet" id="169147">
    <property type="disease" value="Immunodeficiency due to a classical component pathway complement deficiency"/>
</dbReference>
<dbReference type="PharmGKB" id="PA25623"/>
<dbReference type="eggNOG" id="ENOG502RYR2">
    <property type="taxonomic scope" value="Eukaryota"/>
</dbReference>
<dbReference type="InParanoid" id="P02746"/>
<dbReference type="OrthoDB" id="8964326at2759"/>
<dbReference type="PAN-GO" id="P02746">
    <property type="GO annotations" value="0 GO annotations based on evolutionary models"/>
</dbReference>
<dbReference type="PhylomeDB" id="P02746"/>
<dbReference type="TreeFam" id="TF329591"/>
<dbReference type="PathwayCommons" id="P02746"/>
<dbReference type="Reactome" id="R-HSA-166663">
    <property type="pathway name" value="Initial triggering of complement"/>
</dbReference>
<dbReference type="Reactome" id="R-HSA-173623">
    <property type="pathway name" value="Classical antibody-mediated complement activation"/>
</dbReference>
<dbReference type="Reactome" id="R-HSA-977606">
    <property type="pathway name" value="Regulation of Complement cascade"/>
</dbReference>
<dbReference type="SignaLink" id="P02746"/>
<dbReference type="SIGNOR" id="P02746"/>
<dbReference type="BioGRID-ORCS" id="713">
    <property type="hits" value="11 hits in 1154 CRISPR screens"/>
</dbReference>
<dbReference type="ChiTaRS" id="C1QB">
    <property type="organism name" value="human"/>
</dbReference>
<dbReference type="EvolutionaryTrace" id="P02746"/>
<dbReference type="GenomeRNAi" id="713"/>
<dbReference type="Pharos" id="P02746">
    <property type="development level" value="Tbio"/>
</dbReference>
<dbReference type="PRO" id="PR:P02746"/>
<dbReference type="Proteomes" id="UP000005640">
    <property type="component" value="Chromosome 1"/>
</dbReference>
<dbReference type="RNAct" id="P02746">
    <property type="molecule type" value="protein"/>
</dbReference>
<dbReference type="GO" id="GO:0072562">
    <property type="term" value="C:blood microparticle"/>
    <property type="evidence" value="ECO:0007005"/>
    <property type="project" value="UniProtKB"/>
</dbReference>
<dbReference type="GO" id="GO:0005581">
    <property type="term" value="C:collagen trimer"/>
    <property type="evidence" value="ECO:0007669"/>
    <property type="project" value="UniProtKB-KW"/>
</dbReference>
<dbReference type="GO" id="GO:0062023">
    <property type="term" value="C:collagen-containing extracellular matrix"/>
    <property type="evidence" value="ECO:0007005"/>
    <property type="project" value="BHF-UCL"/>
</dbReference>
<dbReference type="GO" id="GO:0005602">
    <property type="term" value="C:complement component C1 complex"/>
    <property type="evidence" value="ECO:0000304"/>
    <property type="project" value="ProtInc"/>
</dbReference>
<dbReference type="GO" id="GO:0062167">
    <property type="term" value="C:complement component C1q complex"/>
    <property type="evidence" value="ECO:0000353"/>
    <property type="project" value="ComplexPortal"/>
</dbReference>
<dbReference type="GO" id="GO:0005576">
    <property type="term" value="C:extracellular region"/>
    <property type="evidence" value="ECO:0000314"/>
    <property type="project" value="ComplexPortal"/>
</dbReference>
<dbReference type="GO" id="GO:0098794">
    <property type="term" value="C:postsynapse"/>
    <property type="evidence" value="ECO:0000250"/>
    <property type="project" value="ARUK-UCL"/>
</dbReference>
<dbReference type="GO" id="GO:0045202">
    <property type="term" value="C:synapse"/>
    <property type="evidence" value="ECO:0000250"/>
    <property type="project" value="ARUK-UCL"/>
</dbReference>
<dbReference type="GO" id="GO:0006956">
    <property type="term" value="P:complement activation"/>
    <property type="evidence" value="ECO:0000304"/>
    <property type="project" value="ProtInc"/>
</dbReference>
<dbReference type="GO" id="GO:0006958">
    <property type="term" value="P:complement activation, classical pathway"/>
    <property type="evidence" value="ECO:0000314"/>
    <property type="project" value="ComplexPortal"/>
</dbReference>
<dbReference type="GO" id="GO:0045087">
    <property type="term" value="P:innate immune response"/>
    <property type="evidence" value="ECO:0007669"/>
    <property type="project" value="UniProtKB-KW"/>
</dbReference>
<dbReference type="GO" id="GO:0098883">
    <property type="term" value="P:synapse pruning"/>
    <property type="evidence" value="ECO:0000250"/>
    <property type="project" value="ARUK-UCL"/>
</dbReference>
<dbReference type="FunFam" id="2.60.120.40:FF:000001">
    <property type="entry name" value="Complement C1q B chain"/>
    <property type="match status" value="1"/>
</dbReference>
<dbReference type="Gene3D" id="2.60.120.40">
    <property type="match status" value="1"/>
</dbReference>
<dbReference type="InterPro" id="IPR001073">
    <property type="entry name" value="C1q_dom"/>
</dbReference>
<dbReference type="InterPro" id="IPR008160">
    <property type="entry name" value="Collagen"/>
</dbReference>
<dbReference type="InterPro" id="IPR050392">
    <property type="entry name" value="Collagen/C1q_domain"/>
</dbReference>
<dbReference type="InterPro" id="IPR008983">
    <property type="entry name" value="Tumour_necrosis_fac-like_dom"/>
</dbReference>
<dbReference type="PANTHER" id="PTHR15427:SF18">
    <property type="entry name" value="COMPLEMENT C1Q SUBCOMPONENT SUBUNIT B"/>
    <property type="match status" value="1"/>
</dbReference>
<dbReference type="PANTHER" id="PTHR15427">
    <property type="entry name" value="EMILIN ELASTIN MICROFIBRIL INTERFACE-LOCATED PROTEIN ELASTIN MICROFIBRIL INTERFACER"/>
    <property type="match status" value="1"/>
</dbReference>
<dbReference type="Pfam" id="PF00386">
    <property type="entry name" value="C1q"/>
    <property type="match status" value="1"/>
</dbReference>
<dbReference type="Pfam" id="PF01391">
    <property type="entry name" value="Collagen"/>
    <property type="match status" value="2"/>
</dbReference>
<dbReference type="PRINTS" id="PR00007">
    <property type="entry name" value="COMPLEMNTC1Q"/>
</dbReference>
<dbReference type="SMART" id="SM00110">
    <property type="entry name" value="C1Q"/>
    <property type="match status" value="1"/>
</dbReference>
<dbReference type="SUPFAM" id="SSF49842">
    <property type="entry name" value="TNF-like"/>
    <property type="match status" value="1"/>
</dbReference>
<dbReference type="PROSITE" id="PS50871">
    <property type="entry name" value="C1Q"/>
    <property type="match status" value="1"/>
</dbReference>
<gene>
    <name evidence="24 26" type="primary">C1QB</name>
</gene>
<sequence>MMMKIPWGSIPVLMLLLLLGLIDISQAQLSCTGPPAIPGIPGIPGTPGPDGQPGTPGIKGEKGLPGLAGDHGEFGEKGDPGIPGNPGKVGPKGPMGPKGGPGAPGAPGPKGESGDYKATQKIAFSATRTINVPLRRDQTIRFDHVITNMNNNYEPRSGKFTCKVPGLYYFTYHASSRGNLCVNLMRGRERAQKVVTFCDYAYNTFQVTTGGMVLKLEQGENVFLQATDKNSLLGMEGANSIFSGFLLFPDMEA</sequence>
<feature type="signal peptide" evidence="16 22">
    <location>
        <begin position="1"/>
        <end position="27"/>
    </location>
</feature>
<feature type="chain" id="PRO_0000003521" description="Complement C1q subcomponent subunit B">
    <location>
        <begin position="28"/>
        <end position="253"/>
    </location>
</feature>
<feature type="domain" description="Collagen-like 1">
    <location>
        <begin position="37"/>
        <end position="86"/>
    </location>
</feature>
<feature type="domain" description="Collagen-like 2">
    <location>
        <begin position="60"/>
        <end position="114"/>
    </location>
</feature>
<feature type="domain" description="C1q" evidence="1">
    <location>
        <begin position="117"/>
        <end position="253"/>
    </location>
</feature>
<feature type="region of interest" description="Disordered" evidence="2">
    <location>
        <begin position="38"/>
        <end position="115"/>
    </location>
</feature>
<feature type="compositionally biased region" description="Basic and acidic residues" evidence="2">
    <location>
        <begin position="70"/>
        <end position="79"/>
    </location>
</feature>
<feature type="compositionally biased region" description="Low complexity" evidence="2">
    <location>
        <begin position="80"/>
        <end position="92"/>
    </location>
</feature>
<feature type="compositionally biased region" description="Gly residues" evidence="2">
    <location>
        <begin position="96"/>
        <end position="105"/>
    </location>
</feature>
<feature type="binding site" evidence="4 6 27 28">
    <location>
        <position position="199"/>
    </location>
    <ligand>
        <name>Ca(2+)</name>
        <dbReference type="ChEBI" id="CHEBI:29108"/>
    </ligand>
</feature>
<feature type="binding site" evidence="4 6 27 28">
    <location>
        <position position="200"/>
    </location>
    <ligand>
        <name>Ca(2+)</name>
        <dbReference type="ChEBI" id="CHEBI:29108"/>
    </ligand>
</feature>
<feature type="binding site" evidence="4 6 27 28">
    <location>
        <position position="206"/>
    </location>
    <ligand>
        <name>Ca(2+)</name>
        <dbReference type="ChEBI" id="CHEBI:29108"/>
    </ligand>
</feature>
<feature type="modified residue" description="Pyrrolidone carboxylic acid" evidence="22">
    <location>
        <position position="28"/>
    </location>
</feature>
<feature type="modified residue" description="4-hydroxyproline" evidence="16">
    <location>
        <position position="35"/>
    </location>
</feature>
<feature type="modified residue" description="4-hydroxyproline" evidence="16">
    <location>
        <position position="38"/>
    </location>
</feature>
<feature type="modified residue" description="4-hydroxyproline" evidence="16">
    <location>
        <position position="41"/>
    </location>
</feature>
<feature type="modified residue" description="4-hydroxyproline" evidence="16">
    <location>
        <position position="53"/>
    </location>
</feature>
<feature type="modified residue" description="4-hydroxyproline" evidence="16">
    <location>
        <position position="56"/>
    </location>
</feature>
<feature type="modified residue" description="5-hydroxylysine" evidence="16">
    <location>
        <position position="59"/>
    </location>
</feature>
<feature type="modified residue" description="5-hydroxylysine" evidence="16">
    <location>
        <position position="62"/>
    </location>
</feature>
<feature type="modified residue" description="4-hydroxyproline" evidence="16">
    <location>
        <position position="65"/>
    </location>
</feature>
<feature type="modified residue" description="5-hydroxylysine" evidence="16">
    <location>
        <position position="77"/>
    </location>
</feature>
<feature type="modified residue" description="4-hydroxyproline" evidence="16">
    <location>
        <position position="83"/>
    </location>
</feature>
<feature type="modified residue" description="4-hydroxyproline" evidence="16">
    <location>
        <position position="86"/>
    </location>
</feature>
<feature type="modified residue" description="5-hydroxylysine" evidence="16">
    <location>
        <position position="92"/>
    </location>
</feature>
<feature type="modified residue" description="5-hydroxylysine" evidence="16">
    <location>
        <position position="98"/>
    </location>
</feature>
<feature type="modified residue" description="4-hydroxyproline" evidence="16">
    <location>
        <position position="101"/>
    </location>
</feature>
<feature type="modified residue" description="4-hydroxyproline" evidence="16">
    <location>
        <position position="104"/>
    </location>
</feature>
<feature type="modified residue" description="4-hydroxyproline" evidence="16">
    <location>
        <position position="107"/>
    </location>
</feature>
<feature type="modified residue" description="5-hydroxylysine" evidence="16">
    <location>
        <position position="110"/>
    </location>
</feature>
<feature type="disulfide bond" description="Interchain (with C-26 in chain A)" evidence="22">
    <location>
        <position position="31"/>
    </location>
</feature>
<feature type="disulfide bond" evidence="12 32">
    <location>
        <begin position="181"/>
        <end position="198"/>
    </location>
</feature>
<feature type="sequence variant" id="VAR_008541" description="In C1QD2." evidence="23">
    <original>G</original>
    <variation>D</variation>
    <location>
        <position position="42"/>
    </location>
</feature>
<feature type="sequence variant" id="VAR_035551" description="In a breast cancer sample; somatic mutation; dbSNP:rs776292843." evidence="5">
    <original>A</original>
    <variation>T</variation>
    <location>
        <position position="123"/>
    </location>
</feature>
<feature type="mutagenesis site" description="In LysB61; impaired ability to associate with C1R and C1S." evidence="10">
    <original>K</original>
    <variation>A</variation>
    <location>
        <position position="88"/>
    </location>
</feature>
<feature type="sequence conflict" description="In Ref. 4; AA sequence." evidence="25" ref="4">
    <original>Q</original>
    <variation>E</variation>
    <location>
        <position position="28"/>
    </location>
</feature>
<feature type="sequence conflict" description="In Ref. 4; AA sequence." evidence="25" ref="4">
    <original>N</original>
    <variation>D</variation>
    <location>
        <position position="85"/>
    </location>
</feature>
<feature type="sequence conflict" description="In Ref. 4; AA sequence and 5; AA sequence." evidence="25" ref="4 5">
    <original>G</original>
    <variation>P</variation>
    <location>
        <position position="100"/>
    </location>
</feature>
<feature type="helix" evidence="35">
    <location>
        <begin position="118"/>
        <end position="120"/>
    </location>
</feature>
<feature type="strand" evidence="34">
    <location>
        <begin position="123"/>
        <end position="127"/>
    </location>
</feature>
<feature type="strand" evidence="34">
    <location>
        <begin position="144"/>
        <end position="149"/>
    </location>
</feature>
<feature type="turn" evidence="34">
    <location>
        <begin position="155"/>
        <end position="157"/>
    </location>
</feature>
<feature type="strand" evidence="33">
    <location>
        <begin position="159"/>
        <end position="161"/>
    </location>
</feature>
<feature type="strand" evidence="34">
    <location>
        <begin position="166"/>
        <end position="178"/>
    </location>
</feature>
<feature type="strand" evidence="34">
    <location>
        <begin position="180"/>
        <end position="190"/>
    </location>
</feature>
<feature type="strand" evidence="34">
    <location>
        <begin position="192"/>
        <end position="199"/>
    </location>
</feature>
<feature type="strand" evidence="34">
    <location>
        <begin position="202"/>
        <end position="204"/>
    </location>
</feature>
<feature type="strand" evidence="34">
    <location>
        <begin position="206"/>
        <end position="216"/>
    </location>
</feature>
<feature type="strand" evidence="34">
    <location>
        <begin position="221"/>
        <end position="230"/>
    </location>
</feature>
<feature type="strand" evidence="34">
    <location>
        <begin position="241"/>
        <end position="249"/>
    </location>
</feature>